<evidence type="ECO:0000255" key="1">
    <source>
        <dbReference type="HAMAP-Rule" id="MF_00362"/>
    </source>
</evidence>
<evidence type="ECO:0000305" key="2"/>
<protein>
    <recommendedName>
        <fullName evidence="1">Large ribosomal subunit protein uL10</fullName>
    </recommendedName>
    <alternativeName>
        <fullName evidence="2">50S ribosomal protein L10</fullName>
    </alternativeName>
</protein>
<proteinExistence type="inferred from homology"/>
<comment type="function">
    <text evidence="1">Forms part of the ribosomal stalk, playing a central role in the interaction of the ribosome with GTP-bound translation factors.</text>
</comment>
<comment type="subunit">
    <text evidence="1">Part of the ribosomal stalk of the 50S ribosomal subunit. The N-terminus interacts with L11 and the large rRNA to form the base of the stalk. The C-terminus forms an elongated spine to which L12 dimers bind in a sequential fashion forming a multimeric L10(L12)X complex.</text>
</comment>
<comment type="similarity">
    <text evidence="1">Belongs to the universal ribosomal protein uL10 family.</text>
</comment>
<reference key="1">
    <citation type="journal article" date="2008" name="J. Bacteriol.">
        <title>Genome sequence of a nephritogenic and highly transformable M49 strain of Streptococcus pyogenes.</title>
        <authorList>
            <person name="McShan W.M."/>
            <person name="Ferretti J.J."/>
            <person name="Karasawa T."/>
            <person name="Suvorov A.N."/>
            <person name="Lin S."/>
            <person name="Qin B."/>
            <person name="Jia H."/>
            <person name="Kenton S."/>
            <person name="Najar F."/>
            <person name="Wu H."/>
            <person name="Scott J."/>
            <person name="Roe B.A."/>
            <person name="Savic D.J."/>
        </authorList>
    </citation>
    <scope>NUCLEOTIDE SEQUENCE [LARGE SCALE GENOMIC DNA]</scope>
    <source>
        <strain>NZ131</strain>
    </source>
</reference>
<sequence length="166" mass="17551">MSEAIIAKKAEQVELIAEKMKAAASIVVVDSRGLTVDQDTVLRRSLRESGVEFKVIKNSILTRAAEKAGLDELKDVFVGPSAVAFSNEDVIAPAKVINDFTKTADALEIKGGAIEGAVSSKEEIQALATLPNREGMLSMLLSVLQAPVRNVAYAVKAVAENKEGAA</sequence>
<name>RL10_STRPZ</name>
<keyword id="KW-0687">Ribonucleoprotein</keyword>
<keyword id="KW-0689">Ribosomal protein</keyword>
<keyword id="KW-0694">RNA-binding</keyword>
<keyword id="KW-0699">rRNA-binding</keyword>
<dbReference type="EMBL" id="CP000829">
    <property type="protein sequence ID" value="ACI61154.1"/>
    <property type="molecule type" value="Genomic_DNA"/>
</dbReference>
<dbReference type="SMR" id="B5XLE2"/>
<dbReference type="KEGG" id="soz:Spy49_0846"/>
<dbReference type="HOGENOM" id="CLU_092227_2_0_9"/>
<dbReference type="Proteomes" id="UP000001039">
    <property type="component" value="Chromosome"/>
</dbReference>
<dbReference type="GO" id="GO:0015934">
    <property type="term" value="C:large ribosomal subunit"/>
    <property type="evidence" value="ECO:0007669"/>
    <property type="project" value="InterPro"/>
</dbReference>
<dbReference type="GO" id="GO:0070180">
    <property type="term" value="F:large ribosomal subunit rRNA binding"/>
    <property type="evidence" value="ECO:0007669"/>
    <property type="project" value="UniProtKB-UniRule"/>
</dbReference>
<dbReference type="GO" id="GO:0003735">
    <property type="term" value="F:structural constituent of ribosome"/>
    <property type="evidence" value="ECO:0007669"/>
    <property type="project" value="InterPro"/>
</dbReference>
<dbReference type="GO" id="GO:0006412">
    <property type="term" value="P:translation"/>
    <property type="evidence" value="ECO:0007669"/>
    <property type="project" value="UniProtKB-UniRule"/>
</dbReference>
<dbReference type="CDD" id="cd05797">
    <property type="entry name" value="Ribosomal_L10"/>
    <property type="match status" value="1"/>
</dbReference>
<dbReference type="FunFam" id="3.30.70.1730:FF:000001">
    <property type="entry name" value="50S ribosomal protein L10"/>
    <property type="match status" value="1"/>
</dbReference>
<dbReference type="Gene3D" id="3.30.70.1730">
    <property type="match status" value="1"/>
</dbReference>
<dbReference type="HAMAP" id="MF_00362">
    <property type="entry name" value="Ribosomal_uL10"/>
    <property type="match status" value="1"/>
</dbReference>
<dbReference type="InterPro" id="IPR001790">
    <property type="entry name" value="Ribosomal_uL10"/>
</dbReference>
<dbReference type="InterPro" id="IPR043141">
    <property type="entry name" value="Ribosomal_uL10-like_sf"/>
</dbReference>
<dbReference type="InterPro" id="IPR022973">
    <property type="entry name" value="Ribosomal_uL10_bac"/>
</dbReference>
<dbReference type="InterPro" id="IPR047865">
    <property type="entry name" value="Ribosomal_uL10_bac_type"/>
</dbReference>
<dbReference type="InterPro" id="IPR002363">
    <property type="entry name" value="Ribosomal_uL10_CS_bac"/>
</dbReference>
<dbReference type="NCBIfam" id="NF000955">
    <property type="entry name" value="PRK00099.1-1"/>
    <property type="match status" value="1"/>
</dbReference>
<dbReference type="PANTHER" id="PTHR11560">
    <property type="entry name" value="39S RIBOSOMAL PROTEIN L10, MITOCHONDRIAL"/>
    <property type="match status" value="1"/>
</dbReference>
<dbReference type="Pfam" id="PF00466">
    <property type="entry name" value="Ribosomal_L10"/>
    <property type="match status" value="1"/>
</dbReference>
<dbReference type="SUPFAM" id="SSF160369">
    <property type="entry name" value="Ribosomal protein L10-like"/>
    <property type="match status" value="1"/>
</dbReference>
<dbReference type="PROSITE" id="PS01109">
    <property type="entry name" value="RIBOSOMAL_L10"/>
    <property type="match status" value="1"/>
</dbReference>
<organism>
    <name type="scientific">Streptococcus pyogenes serotype M49 (strain NZ131)</name>
    <dbReference type="NCBI Taxonomy" id="471876"/>
    <lineage>
        <taxon>Bacteria</taxon>
        <taxon>Bacillati</taxon>
        <taxon>Bacillota</taxon>
        <taxon>Bacilli</taxon>
        <taxon>Lactobacillales</taxon>
        <taxon>Streptococcaceae</taxon>
        <taxon>Streptococcus</taxon>
    </lineage>
</organism>
<feature type="chain" id="PRO_1000121023" description="Large ribosomal subunit protein uL10">
    <location>
        <begin position="1"/>
        <end position="166"/>
    </location>
</feature>
<accession>B5XLE2</accession>
<gene>
    <name evidence="1" type="primary">rplJ</name>
    <name type="ordered locus">Spy49_0846</name>
</gene>